<keyword id="KW-0378">Hydrolase</keyword>
<keyword id="KW-0479">Metal-binding</keyword>
<keyword id="KW-1185">Reference proteome</keyword>
<keyword id="KW-0862">Zinc</keyword>
<organism>
    <name type="scientific">Syntrophotalea carbinolica (strain DSM 2380 / NBRC 103641 / GraBd1)</name>
    <name type="common">Pelobacter carbinolicus</name>
    <dbReference type="NCBI Taxonomy" id="338963"/>
    <lineage>
        <taxon>Bacteria</taxon>
        <taxon>Pseudomonadati</taxon>
        <taxon>Thermodesulfobacteriota</taxon>
        <taxon>Desulfuromonadia</taxon>
        <taxon>Desulfuromonadales</taxon>
        <taxon>Syntrophotaleaceae</taxon>
        <taxon>Syntrophotalea</taxon>
    </lineage>
</organism>
<protein>
    <recommendedName>
        <fullName evidence="1">Probable phosphatase Pcar_2586</fullName>
        <ecNumber evidence="1">3.1.3.-</ecNumber>
    </recommendedName>
</protein>
<gene>
    <name type="ordered locus">Pcar_2586</name>
</gene>
<reference key="1">
    <citation type="submission" date="2005-10" db="EMBL/GenBank/DDBJ databases">
        <title>Complete sequence of Pelobacter carbinolicus DSM 2380.</title>
        <authorList>
            <person name="Copeland A."/>
            <person name="Lucas S."/>
            <person name="Lapidus A."/>
            <person name="Barry K."/>
            <person name="Detter J.C."/>
            <person name="Glavina T."/>
            <person name="Hammon N."/>
            <person name="Israni S."/>
            <person name="Pitluck S."/>
            <person name="Chertkov O."/>
            <person name="Schmutz J."/>
            <person name="Larimer F."/>
            <person name="Land M."/>
            <person name="Kyrpides N."/>
            <person name="Ivanova N."/>
            <person name="Richardson P."/>
        </authorList>
    </citation>
    <scope>NUCLEOTIDE SEQUENCE [LARGE SCALE GENOMIC DNA]</scope>
    <source>
        <strain>DSM 2380 / NBRC 103641 / GraBd1</strain>
    </source>
</reference>
<comment type="cofactor">
    <cofactor evidence="1">
        <name>Zn(2+)</name>
        <dbReference type="ChEBI" id="CHEBI:29105"/>
    </cofactor>
    <text evidence="1">Binds 3 Zn(2+) ions per subunit.</text>
</comment>
<comment type="similarity">
    <text evidence="1">Belongs to the PHP family.</text>
</comment>
<accession>Q3A1D3</accession>
<name>Y2586_SYNC1</name>
<proteinExistence type="inferred from homology"/>
<dbReference type="EC" id="3.1.3.-" evidence="1"/>
<dbReference type="EMBL" id="CP000142">
    <property type="protein sequence ID" value="ABA89824.1"/>
    <property type="molecule type" value="Genomic_DNA"/>
</dbReference>
<dbReference type="RefSeq" id="WP_011342362.1">
    <property type="nucleotide sequence ID" value="NC_007498.2"/>
</dbReference>
<dbReference type="SMR" id="Q3A1D3"/>
<dbReference type="STRING" id="338963.Pcar_2586"/>
<dbReference type="KEGG" id="pca:Pcar_2586"/>
<dbReference type="eggNOG" id="COG1387">
    <property type="taxonomic scope" value="Bacteria"/>
</dbReference>
<dbReference type="HOGENOM" id="CLU_061999_0_1_7"/>
<dbReference type="OrthoDB" id="9808747at2"/>
<dbReference type="Proteomes" id="UP000002534">
    <property type="component" value="Chromosome"/>
</dbReference>
<dbReference type="GO" id="GO:0005829">
    <property type="term" value="C:cytosol"/>
    <property type="evidence" value="ECO:0007669"/>
    <property type="project" value="TreeGrafter"/>
</dbReference>
<dbReference type="GO" id="GO:0042578">
    <property type="term" value="F:phosphoric ester hydrolase activity"/>
    <property type="evidence" value="ECO:0007669"/>
    <property type="project" value="TreeGrafter"/>
</dbReference>
<dbReference type="GO" id="GO:0008270">
    <property type="term" value="F:zinc ion binding"/>
    <property type="evidence" value="ECO:0007669"/>
    <property type="project" value="InterPro"/>
</dbReference>
<dbReference type="GO" id="GO:0071978">
    <property type="term" value="P:bacterial-type flagellum-dependent swarming motility"/>
    <property type="evidence" value="ECO:0007669"/>
    <property type="project" value="TreeGrafter"/>
</dbReference>
<dbReference type="CDD" id="cd07437">
    <property type="entry name" value="PHP_HisPPase_Ycdx_like"/>
    <property type="match status" value="1"/>
</dbReference>
<dbReference type="Gene3D" id="3.20.20.140">
    <property type="entry name" value="Metal-dependent hydrolases"/>
    <property type="match status" value="1"/>
</dbReference>
<dbReference type="HAMAP" id="MF_01561">
    <property type="entry name" value="YcdX_phosphat"/>
    <property type="match status" value="1"/>
</dbReference>
<dbReference type="InterPro" id="IPR023710">
    <property type="entry name" value="Phosphatase_YcdX_put"/>
</dbReference>
<dbReference type="InterPro" id="IPR004013">
    <property type="entry name" value="PHP_dom"/>
</dbReference>
<dbReference type="InterPro" id="IPR050243">
    <property type="entry name" value="PHP_phosphatase"/>
</dbReference>
<dbReference type="InterPro" id="IPR003141">
    <property type="entry name" value="Pol/His_phosphatase_N"/>
</dbReference>
<dbReference type="InterPro" id="IPR016195">
    <property type="entry name" value="Pol/histidinol_Pase-like"/>
</dbReference>
<dbReference type="NCBIfam" id="NF006702">
    <property type="entry name" value="PRK09248.1"/>
    <property type="match status" value="1"/>
</dbReference>
<dbReference type="PANTHER" id="PTHR36928">
    <property type="entry name" value="PHOSPHATASE YCDX-RELATED"/>
    <property type="match status" value="1"/>
</dbReference>
<dbReference type="PANTHER" id="PTHR36928:SF1">
    <property type="entry name" value="PHOSPHATASE YCDX-RELATED"/>
    <property type="match status" value="1"/>
</dbReference>
<dbReference type="Pfam" id="PF02811">
    <property type="entry name" value="PHP"/>
    <property type="match status" value="1"/>
</dbReference>
<dbReference type="SMART" id="SM00481">
    <property type="entry name" value="POLIIIAc"/>
    <property type="match status" value="1"/>
</dbReference>
<dbReference type="SUPFAM" id="SSF89550">
    <property type="entry name" value="PHP domain-like"/>
    <property type="match status" value="1"/>
</dbReference>
<sequence length="240" mass="25855">MTSTLKAEVDLHVHSLASGHAYSTINEIAAEAARRGLRGVAMTDHGPNMPAAPHPYHFECLYMIPDHLCGVRIFKGAETNIIGPGQVDLEDRLLEKMDLVLAGFHRHCGYGPSELQANTRAVLELMENPRIHIICHPGNPEYPLDYEAVARQAAATGTALELNNSSFVTSRVGSADNCRLIAKLCARFHSPVSLGSDAHIAQSVASFGHALDALNAAGIAPEQIVNRTLETTLDFLGMNT</sequence>
<feature type="chain" id="PRO_0000228694" description="Probable phosphatase Pcar_2586">
    <location>
        <begin position="1"/>
        <end position="240"/>
    </location>
</feature>
<feature type="binding site" evidence="1">
    <location>
        <position position="12"/>
    </location>
    <ligand>
        <name>Zn(2+)</name>
        <dbReference type="ChEBI" id="CHEBI:29105"/>
        <label>1</label>
    </ligand>
</feature>
<feature type="binding site" evidence="1">
    <location>
        <position position="14"/>
    </location>
    <ligand>
        <name>Zn(2+)</name>
        <dbReference type="ChEBI" id="CHEBI:29105"/>
        <label>1</label>
    </ligand>
</feature>
<feature type="binding site" evidence="1">
    <location>
        <position position="20"/>
    </location>
    <ligand>
        <name>Zn(2+)</name>
        <dbReference type="ChEBI" id="CHEBI:29105"/>
        <label>2</label>
    </ligand>
</feature>
<feature type="binding site" evidence="1">
    <location>
        <position position="45"/>
    </location>
    <ligand>
        <name>Zn(2+)</name>
        <dbReference type="ChEBI" id="CHEBI:29105"/>
        <label>2</label>
    </ligand>
</feature>
<feature type="binding site" evidence="1">
    <location>
        <position position="78"/>
    </location>
    <ligand>
        <name>Zn(2+)</name>
        <dbReference type="ChEBI" id="CHEBI:29105"/>
        <label>1</label>
    </ligand>
</feature>
<feature type="binding site" evidence="1">
    <location>
        <position position="78"/>
    </location>
    <ligand>
        <name>Zn(2+)</name>
        <dbReference type="ChEBI" id="CHEBI:29105"/>
        <label>3</label>
    </ligand>
</feature>
<feature type="binding site" evidence="1">
    <location>
        <position position="105"/>
    </location>
    <ligand>
        <name>Zn(2+)</name>
        <dbReference type="ChEBI" id="CHEBI:29105"/>
        <label>3</label>
    </ligand>
</feature>
<feature type="binding site" evidence="1">
    <location>
        <position position="136"/>
    </location>
    <ligand>
        <name>Zn(2+)</name>
        <dbReference type="ChEBI" id="CHEBI:29105"/>
        <label>3</label>
    </ligand>
</feature>
<feature type="binding site" evidence="1">
    <location>
        <position position="197"/>
    </location>
    <ligand>
        <name>Zn(2+)</name>
        <dbReference type="ChEBI" id="CHEBI:29105"/>
        <label>1</label>
    </ligand>
</feature>
<feature type="binding site" evidence="1">
    <location>
        <position position="199"/>
    </location>
    <ligand>
        <name>Zn(2+)</name>
        <dbReference type="ChEBI" id="CHEBI:29105"/>
        <label>2</label>
    </ligand>
</feature>
<evidence type="ECO:0000255" key="1">
    <source>
        <dbReference type="HAMAP-Rule" id="MF_01561"/>
    </source>
</evidence>